<evidence type="ECO:0000250" key="1">
    <source>
        <dbReference type="UniProtKB" id="P68363"/>
    </source>
</evidence>
<evidence type="ECO:0000250" key="2">
    <source>
        <dbReference type="UniProtKB" id="Q13509"/>
    </source>
</evidence>
<evidence type="ECO:0000256" key="3">
    <source>
        <dbReference type="SAM" id="MobiDB-lite"/>
    </source>
</evidence>
<evidence type="ECO:0000305" key="4"/>
<reference key="1">
    <citation type="journal article" date="1995" name="Plant Mol. Biol.">
        <title>The marine red alga Chondrus crispus has a highly divergent beta-tubulin gene with a characteristic 5' intron: functional and evolutionary implications.</title>
        <authorList>
            <person name="Liaud M.-F."/>
            <person name="Brandt U."/>
            <person name="Cerff R."/>
        </authorList>
    </citation>
    <scope>NUCLEOTIDE SEQUENCE [GENOMIC DNA / MRNA]</scope>
    <source>
        <strain>Stackhouse</strain>
    </source>
</reference>
<gene>
    <name type="primary">TUBB</name>
    <name type="synonym">TUB1</name>
</gene>
<accession>Q42480</accession>
<comment type="function">
    <text>Tubulin is the major constituent of microtubules, a cylinder consisting of laterally associated linear protofilaments composed of alpha- and beta-tubulin heterodimers. Microtubules grow by the addition of GTP-tubulin dimers to the microtubule end, where a stabilizing cap forms. Below the cap, tubulin dimers are in GDP-bound state, owing to GTPase activity of alpha-tubulin.</text>
</comment>
<comment type="cofactor">
    <cofactor evidence="1">
        <name>Mg(2+)</name>
        <dbReference type="ChEBI" id="CHEBI:18420"/>
    </cofactor>
</comment>
<comment type="subunit">
    <text>Dimer of alpha and beta chains. A typical microtubule is a hollow water-filled tube with an outer diameter of 25 nm and an inner diameter of 15 nM. Alpha-beta heterodimers associate head-to-tail to form protofilaments running lengthwise along the microtubule wall with the beta-tubulin subunit facing the microtubule plus end conferring a structural polarity. Microtubules usually have 13 protofilaments but different protofilament numbers can be found in some organisms and specialized cells.</text>
</comment>
<comment type="subcellular location">
    <subcellularLocation>
        <location>Cytoplasm</location>
        <location>Cytoskeleton</location>
    </subcellularLocation>
</comment>
<comment type="similarity">
    <text evidence="4">Belongs to the tubulin family.</text>
</comment>
<protein>
    <recommendedName>
        <fullName>Tubulin beta-1 chain</fullName>
    </recommendedName>
    <alternativeName>
        <fullName>Beta-1-tubulin</fullName>
    </alternativeName>
</protein>
<name>TBB1_CHOCR</name>
<feature type="chain" id="PRO_0000048333" description="Tubulin beta-1 chain">
    <location>
        <begin position="1"/>
        <end position="453"/>
    </location>
</feature>
<feature type="region of interest" description="Disordered" evidence="3">
    <location>
        <begin position="431"/>
        <end position="453"/>
    </location>
</feature>
<feature type="compositionally biased region" description="Acidic residues" evidence="3">
    <location>
        <begin position="436"/>
        <end position="453"/>
    </location>
</feature>
<feature type="binding site" evidence="2">
    <location>
        <position position="12"/>
    </location>
    <ligand>
        <name>GTP</name>
        <dbReference type="ChEBI" id="CHEBI:37565"/>
    </ligand>
</feature>
<feature type="binding site" evidence="1">
    <location>
        <position position="71"/>
    </location>
    <ligand>
        <name>GTP</name>
        <dbReference type="ChEBI" id="CHEBI:37565"/>
    </ligand>
</feature>
<feature type="binding site" evidence="1">
    <location>
        <position position="71"/>
    </location>
    <ligand>
        <name>Mg(2+)</name>
        <dbReference type="ChEBI" id="CHEBI:18420"/>
    </ligand>
</feature>
<feature type="binding site" evidence="2">
    <location>
        <position position="140"/>
    </location>
    <ligand>
        <name>GTP</name>
        <dbReference type="ChEBI" id="CHEBI:37565"/>
    </ligand>
</feature>
<feature type="binding site" evidence="2">
    <location>
        <position position="144"/>
    </location>
    <ligand>
        <name>GTP</name>
        <dbReference type="ChEBI" id="CHEBI:37565"/>
    </ligand>
</feature>
<feature type="binding site" evidence="2">
    <location>
        <position position="145"/>
    </location>
    <ligand>
        <name>GTP</name>
        <dbReference type="ChEBI" id="CHEBI:37565"/>
    </ligand>
</feature>
<feature type="binding site" evidence="2">
    <location>
        <position position="146"/>
    </location>
    <ligand>
        <name>GTP</name>
        <dbReference type="ChEBI" id="CHEBI:37565"/>
    </ligand>
</feature>
<feature type="binding site" evidence="2">
    <location>
        <position position="206"/>
    </location>
    <ligand>
        <name>GTP</name>
        <dbReference type="ChEBI" id="CHEBI:37565"/>
    </ligand>
</feature>
<feature type="binding site" evidence="2">
    <location>
        <position position="228"/>
    </location>
    <ligand>
        <name>GTP</name>
        <dbReference type="ChEBI" id="CHEBI:37565"/>
    </ligand>
</feature>
<sequence>MTRSIVSLQVGQCGNQVGLKFWEGISAEHGIDVDGKYIGDRPDQELHRIGVYYNESSSGSYVPRAAMLDLEPGVLMAIKNSKRGQLFHPDNFAYGQSGAGNNWAKGHYTEGAELVETALDIIRREAETCDVLQGFQVTHSLGGGTGSGMGTLLVSKIREEYPDRMMCTYSVLPSPKVSDTVVEPYNCTLSIHQLIENADCVFAIDNEALYNICYNTLKIEQPSYDELNSLISSVMSGITCSLRFPGQLNADLRKLAVNLVPFPRLHFFAVGHAPLAASNSAGYRSLSVPELAGQMFDRNNMMAEIDPREGRYLTAAVYFRGKVSTKEVEDEMTLMQTKNSAYFVEWIPHNIKTSVCDIPAAGEKISSAFIGNTTAIEATFKRFGNQFRSMFRRKAFLHWYKSEGMDELEFSEAESNLADLVSEYQQYGEATADGVEGYEEEGYENDHPEDDEE</sequence>
<keyword id="KW-0963">Cytoplasm</keyword>
<keyword id="KW-0206">Cytoskeleton</keyword>
<keyword id="KW-0342">GTP-binding</keyword>
<keyword id="KW-0460">Magnesium</keyword>
<keyword id="KW-0479">Metal-binding</keyword>
<keyword id="KW-0493">Microtubule</keyword>
<keyword id="KW-0547">Nucleotide-binding</keyword>
<organism>
    <name type="scientific">Chondrus crispus</name>
    <name type="common">Carrageen Irish moss</name>
    <name type="synonym">Polymorpha crispa</name>
    <dbReference type="NCBI Taxonomy" id="2769"/>
    <lineage>
        <taxon>Eukaryota</taxon>
        <taxon>Rhodophyta</taxon>
        <taxon>Florideophyceae</taxon>
        <taxon>Rhodymeniophycidae</taxon>
        <taxon>Gigartinales</taxon>
        <taxon>Gigartinaceae</taxon>
        <taxon>Chondrus</taxon>
    </lineage>
</organism>
<proteinExistence type="evidence at transcript level"/>
<dbReference type="EMBL" id="X71785">
    <property type="protein sequence ID" value="CAA50670.1"/>
    <property type="molecule type" value="Genomic_DNA"/>
</dbReference>
<dbReference type="EMBL" id="X71784">
    <property type="protein sequence ID" value="CAA50669.1"/>
    <property type="molecule type" value="mRNA"/>
</dbReference>
<dbReference type="PIR" id="S55935">
    <property type="entry name" value="S49168"/>
</dbReference>
<dbReference type="RefSeq" id="XP_005715672.1">
    <property type="nucleotide sequence ID" value="XM_005715615.1"/>
</dbReference>
<dbReference type="SMR" id="Q42480"/>
<dbReference type="EnsemblPlants" id="CDF35853">
    <property type="protein sequence ID" value="CDF35853"/>
    <property type="gene ID" value="CHC_T00004301001"/>
</dbReference>
<dbReference type="Gramene" id="CDF35853">
    <property type="protein sequence ID" value="CDF35853"/>
    <property type="gene ID" value="CHC_T00004301001"/>
</dbReference>
<dbReference type="KEGG" id="ccp:CHC_T00004301001"/>
<dbReference type="OMA" id="DQMRSIQ"/>
<dbReference type="OrthoDB" id="1662883at2759"/>
<dbReference type="PhylomeDB" id="Q42480"/>
<dbReference type="GO" id="GO:0005737">
    <property type="term" value="C:cytoplasm"/>
    <property type="evidence" value="ECO:0007669"/>
    <property type="project" value="UniProtKB-KW"/>
</dbReference>
<dbReference type="GO" id="GO:0005874">
    <property type="term" value="C:microtubule"/>
    <property type="evidence" value="ECO:0007669"/>
    <property type="project" value="UniProtKB-KW"/>
</dbReference>
<dbReference type="GO" id="GO:0005525">
    <property type="term" value="F:GTP binding"/>
    <property type="evidence" value="ECO:0007669"/>
    <property type="project" value="UniProtKB-KW"/>
</dbReference>
<dbReference type="GO" id="GO:0003924">
    <property type="term" value="F:GTPase activity"/>
    <property type="evidence" value="ECO:0007669"/>
    <property type="project" value="InterPro"/>
</dbReference>
<dbReference type="GO" id="GO:0046872">
    <property type="term" value="F:metal ion binding"/>
    <property type="evidence" value="ECO:0007669"/>
    <property type="project" value="UniProtKB-KW"/>
</dbReference>
<dbReference type="GO" id="GO:0005200">
    <property type="term" value="F:structural constituent of cytoskeleton"/>
    <property type="evidence" value="ECO:0007669"/>
    <property type="project" value="InterPro"/>
</dbReference>
<dbReference type="GO" id="GO:0007017">
    <property type="term" value="P:microtubule-based process"/>
    <property type="evidence" value="ECO:0007669"/>
    <property type="project" value="InterPro"/>
</dbReference>
<dbReference type="CDD" id="cd02187">
    <property type="entry name" value="beta_tubulin"/>
    <property type="match status" value="1"/>
</dbReference>
<dbReference type="FunFam" id="3.30.1330.20:FF:000009">
    <property type="entry name" value="Tubulin beta chain"/>
    <property type="match status" value="1"/>
</dbReference>
<dbReference type="FunFam" id="3.40.50.1440:FF:000006">
    <property type="entry name" value="Tubulin beta chain"/>
    <property type="match status" value="1"/>
</dbReference>
<dbReference type="Gene3D" id="1.10.287.600">
    <property type="entry name" value="Helix hairpin bin"/>
    <property type="match status" value="1"/>
</dbReference>
<dbReference type="Gene3D" id="3.30.1330.20">
    <property type="entry name" value="Tubulin/FtsZ, C-terminal domain"/>
    <property type="match status" value="1"/>
</dbReference>
<dbReference type="Gene3D" id="3.40.50.1440">
    <property type="entry name" value="Tubulin/FtsZ, GTPase domain"/>
    <property type="match status" value="1"/>
</dbReference>
<dbReference type="InterPro" id="IPR002453">
    <property type="entry name" value="Beta_tubulin"/>
</dbReference>
<dbReference type="InterPro" id="IPR008280">
    <property type="entry name" value="Tub_FtsZ_C"/>
</dbReference>
<dbReference type="InterPro" id="IPR000217">
    <property type="entry name" value="Tubulin"/>
</dbReference>
<dbReference type="InterPro" id="IPR037103">
    <property type="entry name" value="Tubulin/FtsZ-like_C"/>
</dbReference>
<dbReference type="InterPro" id="IPR018316">
    <property type="entry name" value="Tubulin/FtsZ_2-layer-sand-dom"/>
</dbReference>
<dbReference type="InterPro" id="IPR036525">
    <property type="entry name" value="Tubulin/FtsZ_GTPase_sf"/>
</dbReference>
<dbReference type="InterPro" id="IPR023123">
    <property type="entry name" value="Tubulin_C"/>
</dbReference>
<dbReference type="InterPro" id="IPR017975">
    <property type="entry name" value="Tubulin_CS"/>
</dbReference>
<dbReference type="InterPro" id="IPR003008">
    <property type="entry name" value="Tubulin_FtsZ_GTPase"/>
</dbReference>
<dbReference type="PANTHER" id="PTHR11588">
    <property type="entry name" value="TUBULIN"/>
    <property type="match status" value="1"/>
</dbReference>
<dbReference type="Pfam" id="PF00091">
    <property type="entry name" value="Tubulin"/>
    <property type="match status" value="1"/>
</dbReference>
<dbReference type="Pfam" id="PF03953">
    <property type="entry name" value="Tubulin_C"/>
    <property type="match status" value="1"/>
</dbReference>
<dbReference type="PRINTS" id="PR01163">
    <property type="entry name" value="BETATUBULIN"/>
</dbReference>
<dbReference type="PRINTS" id="PR01161">
    <property type="entry name" value="TUBULIN"/>
</dbReference>
<dbReference type="SMART" id="SM00864">
    <property type="entry name" value="Tubulin"/>
    <property type="match status" value="1"/>
</dbReference>
<dbReference type="SMART" id="SM00865">
    <property type="entry name" value="Tubulin_C"/>
    <property type="match status" value="1"/>
</dbReference>
<dbReference type="SUPFAM" id="SSF55307">
    <property type="entry name" value="Tubulin C-terminal domain-like"/>
    <property type="match status" value="1"/>
</dbReference>
<dbReference type="SUPFAM" id="SSF52490">
    <property type="entry name" value="Tubulin nucleotide-binding domain-like"/>
    <property type="match status" value="1"/>
</dbReference>
<dbReference type="PROSITE" id="PS00227">
    <property type="entry name" value="TUBULIN"/>
    <property type="match status" value="1"/>
</dbReference>